<protein>
    <recommendedName>
        <fullName>Protein archease-like</fullName>
    </recommendedName>
</protein>
<keyword id="KW-0106">Calcium</keyword>
<keyword id="KW-0479">Metal-binding</keyword>
<keyword id="KW-1185">Reference proteome</keyword>
<keyword id="KW-0819">tRNA processing</keyword>
<sequence length="151" mass="17311">MESYGLGQLKNFEYLDHTADIMFHTWGKDLKEALEQMVLIMNNYMVELDSVELDDSATEQTISVNGHDMDSLLFALLDEFLFVFSTEFIIFKQVQIISFDRENFSIKAIGKGVELDKSKHTTGTEIKAITYSCMKIEENPDKSDIHVIVDI</sequence>
<organism>
    <name type="scientific">Dictyostelium discoideum</name>
    <name type="common">Social amoeba</name>
    <dbReference type="NCBI Taxonomy" id="44689"/>
    <lineage>
        <taxon>Eukaryota</taxon>
        <taxon>Amoebozoa</taxon>
        <taxon>Evosea</taxon>
        <taxon>Eumycetozoa</taxon>
        <taxon>Dictyostelia</taxon>
        <taxon>Dictyosteliales</taxon>
        <taxon>Dictyosteliaceae</taxon>
        <taxon>Dictyostelium</taxon>
    </lineage>
</organism>
<reference key="1">
    <citation type="journal article" date="2005" name="Nature">
        <title>The genome of the social amoeba Dictyostelium discoideum.</title>
        <authorList>
            <person name="Eichinger L."/>
            <person name="Pachebat J.A."/>
            <person name="Gloeckner G."/>
            <person name="Rajandream M.A."/>
            <person name="Sucgang R."/>
            <person name="Berriman M."/>
            <person name="Song J."/>
            <person name="Olsen R."/>
            <person name="Szafranski K."/>
            <person name="Xu Q."/>
            <person name="Tunggal B."/>
            <person name="Kummerfeld S."/>
            <person name="Madera M."/>
            <person name="Konfortov B.A."/>
            <person name="Rivero F."/>
            <person name="Bankier A.T."/>
            <person name="Lehmann R."/>
            <person name="Hamlin N."/>
            <person name="Davies R."/>
            <person name="Gaudet P."/>
            <person name="Fey P."/>
            <person name="Pilcher K."/>
            <person name="Chen G."/>
            <person name="Saunders D."/>
            <person name="Sodergren E.J."/>
            <person name="Davis P."/>
            <person name="Kerhornou A."/>
            <person name="Nie X."/>
            <person name="Hall N."/>
            <person name="Anjard C."/>
            <person name="Hemphill L."/>
            <person name="Bason N."/>
            <person name="Farbrother P."/>
            <person name="Desany B."/>
            <person name="Just E."/>
            <person name="Morio T."/>
            <person name="Rost R."/>
            <person name="Churcher C.M."/>
            <person name="Cooper J."/>
            <person name="Haydock S."/>
            <person name="van Driessche N."/>
            <person name="Cronin A."/>
            <person name="Goodhead I."/>
            <person name="Muzny D.M."/>
            <person name="Mourier T."/>
            <person name="Pain A."/>
            <person name="Lu M."/>
            <person name="Harper D."/>
            <person name="Lindsay R."/>
            <person name="Hauser H."/>
            <person name="James K.D."/>
            <person name="Quiles M."/>
            <person name="Madan Babu M."/>
            <person name="Saito T."/>
            <person name="Buchrieser C."/>
            <person name="Wardroper A."/>
            <person name="Felder M."/>
            <person name="Thangavelu M."/>
            <person name="Johnson D."/>
            <person name="Knights A."/>
            <person name="Loulseged H."/>
            <person name="Mungall K.L."/>
            <person name="Oliver K."/>
            <person name="Price C."/>
            <person name="Quail M.A."/>
            <person name="Urushihara H."/>
            <person name="Hernandez J."/>
            <person name="Rabbinowitsch E."/>
            <person name="Steffen D."/>
            <person name="Sanders M."/>
            <person name="Ma J."/>
            <person name="Kohara Y."/>
            <person name="Sharp S."/>
            <person name="Simmonds M.N."/>
            <person name="Spiegler S."/>
            <person name="Tivey A."/>
            <person name="Sugano S."/>
            <person name="White B."/>
            <person name="Walker D."/>
            <person name="Woodward J.R."/>
            <person name="Winckler T."/>
            <person name="Tanaka Y."/>
            <person name="Shaulsky G."/>
            <person name="Schleicher M."/>
            <person name="Weinstock G.M."/>
            <person name="Rosenthal A."/>
            <person name="Cox E.C."/>
            <person name="Chisholm R.L."/>
            <person name="Gibbs R.A."/>
            <person name="Loomis W.F."/>
            <person name="Platzer M."/>
            <person name="Kay R.R."/>
            <person name="Williams J.G."/>
            <person name="Dear P.H."/>
            <person name="Noegel A.A."/>
            <person name="Barrell B.G."/>
            <person name="Kuspa A."/>
        </authorList>
    </citation>
    <scope>NUCLEOTIDE SEQUENCE [LARGE SCALE GENOMIC DNA]</scope>
    <source>
        <strain>AX4</strain>
    </source>
</reference>
<name>ARCH_DICDI</name>
<gene>
    <name type="ORF">DDB_G0293404</name>
</gene>
<accession>Q54BU9</accession>
<dbReference type="EMBL" id="AAFI02000207">
    <property type="protein sequence ID" value="EAL60736.1"/>
    <property type="molecule type" value="Genomic_DNA"/>
</dbReference>
<dbReference type="RefSeq" id="XP_629152.1">
    <property type="nucleotide sequence ID" value="XM_629150.1"/>
</dbReference>
<dbReference type="SMR" id="Q54BU9"/>
<dbReference type="FunCoup" id="Q54BU9">
    <property type="interactions" value="2"/>
</dbReference>
<dbReference type="STRING" id="44689.Q54BU9"/>
<dbReference type="PaxDb" id="44689-DDB0305182"/>
<dbReference type="EnsemblProtists" id="EAL60736">
    <property type="protein sequence ID" value="EAL60736"/>
    <property type="gene ID" value="DDB_G0293404"/>
</dbReference>
<dbReference type="GeneID" id="8629209"/>
<dbReference type="KEGG" id="ddi:DDB_G0293404"/>
<dbReference type="dictyBase" id="DDB_G0293404"/>
<dbReference type="VEuPathDB" id="AmoebaDB:DDB_G0293404"/>
<dbReference type="eggNOG" id="KOG4528">
    <property type="taxonomic scope" value="Eukaryota"/>
</dbReference>
<dbReference type="HOGENOM" id="CLU_111362_0_1_1"/>
<dbReference type="InParanoid" id="Q54BU9"/>
<dbReference type="OMA" id="AITYHKM"/>
<dbReference type="PhylomeDB" id="Q54BU9"/>
<dbReference type="PRO" id="PR:Q54BU9"/>
<dbReference type="Proteomes" id="UP000002195">
    <property type="component" value="Chromosome 6"/>
</dbReference>
<dbReference type="GO" id="GO:0072669">
    <property type="term" value="C:tRNA-splicing ligase complex"/>
    <property type="evidence" value="ECO:0000318"/>
    <property type="project" value="GO_Central"/>
</dbReference>
<dbReference type="GO" id="GO:0046872">
    <property type="term" value="F:metal ion binding"/>
    <property type="evidence" value="ECO:0007669"/>
    <property type="project" value="UniProtKB-KW"/>
</dbReference>
<dbReference type="GO" id="GO:0006388">
    <property type="term" value="P:tRNA splicing, via endonucleolytic cleavage and ligation"/>
    <property type="evidence" value="ECO:0000318"/>
    <property type="project" value="GO_Central"/>
</dbReference>
<dbReference type="FunFam" id="3.55.10.10:FF:000002">
    <property type="entry name" value="Archease, putative"/>
    <property type="match status" value="1"/>
</dbReference>
<dbReference type="Gene3D" id="3.55.10.10">
    <property type="entry name" value="Archease domain"/>
    <property type="match status" value="1"/>
</dbReference>
<dbReference type="InterPro" id="IPR002804">
    <property type="entry name" value="Archease"/>
</dbReference>
<dbReference type="InterPro" id="IPR023572">
    <property type="entry name" value="Archease_dom"/>
</dbReference>
<dbReference type="InterPro" id="IPR036820">
    <property type="entry name" value="Archease_dom_sf"/>
</dbReference>
<dbReference type="PANTHER" id="PTHR12682">
    <property type="entry name" value="ARCHEASE"/>
    <property type="match status" value="1"/>
</dbReference>
<dbReference type="PANTHER" id="PTHR12682:SF11">
    <property type="entry name" value="PROTEIN ARCHEASE"/>
    <property type="match status" value="1"/>
</dbReference>
<dbReference type="Pfam" id="PF01951">
    <property type="entry name" value="Archease"/>
    <property type="match status" value="1"/>
</dbReference>
<dbReference type="SUPFAM" id="SSF69819">
    <property type="entry name" value="MTH1598-like"/>
    <property type="match status" value="1"/>
</dbReference>
<feature type="chain" id="PRO_0000327513" description="Protein archease-like">
    <location>
        <begin position="1"/>
        <end position="151"/>
    </location>
</feature>
<feature type="binding site" evidence="1">
    <location>
        <position position="20"/>
    </location>
    <ligand>
        <name>Ca(2+)</name>
        <dbReference type="ChEBI" id="CHEBI:29108"/>
    </ligand>
</feature>
<feature type="binding site" evidence="1">
    <location>
        <position position="150"/>
    </location>
    <ligand>
        <name>Ca(2+)</name>
        <dbReference type="ChEBI" id="CHEBI:29108"/>
    </ligand>
</feature>
<feature type="binding site" evidence="1">
    <location>
        <position position="151"/>
    </location>
    <ligand>
        <name>Ca(2+)</name>
        <dbReference type="ChEBI" id="CHEBI:29108"/>
    </ligand>
</feature>
<comment type="function">
    <text evidence="1">Component of the tRNA-splicing ligase complex required to facilitate the enzymatic turnover of catalytic subunit RtcB.</text>
</comment>
<comment type="similarity">
    <text evidence="2">Belongs to the archease family.</text>
</comment>
<proteinExistence type="inferred from homology"/>
<evidence type="ECO:0000250" key="1"/>
<evidence type="ECO:0000305" key="2"/>